<comment type="function">
    <text evidence="1">Inhibits all the catalytic activities of DNA gyrase by preventing its interaction with DNA. Acts by binding directly to the C-terminal domain of GyrB, which probably disrupts DNA binding by the gyrase.</text>
</comment>
<comment type="cofactor">
    <cofactor evidence="1">
        <name>Zn(2+)</name>
        <dbReference type="ChEBI" id="CHEBI:29105"/>
    </cofactor>
    <text evidence="1">Binds 1 zinc ion.</text>
</comment>
<comment type="subunit">
    <text evidence="1">Interacts with GyrB.</text>
</comment>
<comment type="similarity">
    <text evidence="1">Belongs to the DNA gyrase inhibitor YacG family.</text>
</comment>
<evidence type="ECO:0000255" key="1">
    <source>
        <dbReference type="HAMAP-Rule" id="MF_00649"/>
    </source>
</evidence>
<evidence type="ECO:0000256" key="2">
    <source>
        <dbReference type="SAM" id="MobiDB-lite"/>
    </source>
</evidence>
<name>YACG_PSEF5</name>
<reference key="1">
    <citation type="journal article" date="2005" name="Nat. Biotechnol.">
        <title>Complete genome sequence of the plant commensal Pseudomonas fluorescens Pf-5.</title>
        <authorList>
            <person name="Paulsen I.T."/>
            <person name="Press C.M."/>
            <person name="Ravel J."/>
            <person name="Kobayashi D.Y."/>
            <person name="Myers G.S.A."/>
            <person name="Mavrodi D.V."/>
            <person name="DeBoy R.T."/>
            <person name="Seshadri R."/>
            <person name="Ren Q."/>
            <person name="Madupu R."/>
            <person name="Dodson R.J."/>
            <person name="Durkin A.S."/>
            <person name="Brinkac L.M."/>
            <person name="Daugherty S.C."/>
            <person name="Sullivan S.A."/>
            <person name="Rosovitz M.J."/>
            <person name="Gwinn M.L."/>
            <person name="Zhou L."/>
            <person name="Schneider D.J."/>
            <person name="Cartinhour S.W."/>
            <person name="Nelson W.C."/>
            <person name="Weidman J."/>
            <person name="Watkins K."/>
            <person name="Tran K."/>
            <person name="Khouri H."/>
            <person name="Pierson E.A."/>
            <person name="Pierson L.S. III"/>
            <person name="Thomashow L.S."/>
            <person name="Loper J.E."/>
        </authorList>
    </citation>
    <scope>NUCLEOTIDE SEQUENCE [LARGE SCALE GENOMIC DNA]</scope>
    <source>
        <strain>ATCC BAA-477 / NRRL B-23932 / Pf-5</strain>
    </source>
</reference>
<keyword id="KW-0479">Metal-binding</keyword>
<keyword id="KW-0862">Zinc</keyword>
<gene>
    <name evidence="1" type="primary">yacG</name>
    <name type="ordered locus">PFL_5291</name>
</gene>
<organism>
    <name type="scientific">Pseudomonas fluorescens (strain ATCC BAA-477 / NRRL B-23932 / Pf-5)</name>
    <dbReference type="NCBI Taxonomy" id="220664"/>
    <lineage>
        <taxon>Bacteria</taxon>
        <taxon>Pseudomonadati</taxon>
        <taxon>Pseudomonadota</taxon>
        <taxon>Gammaproteobacteria</taxon>
        <taxon>Pseudomonadales</taxon>
        <taxon>Pseudomonadaceae</taxon>
        <taxon>Pseudomonas</taxon>
    </lineage>
</organism>
<feature type="chain" id="PRO_1000056983" description="DNA gyrase inhibitor YacG">
    <location>
        <begin position="1"/>
        <end position="67"/>
    </location>
</feature>
<feature type="region of interest" description="Disordered" evidence="2">
    <location>
        <begin position="48"/>
        <end position="67"/>
    </location>
</feature>
<feature type="binding site" evidence="1">
    <location>
        <position position="9"/>
    </location>
    <ligand>
        <name>Zn(2+)</name>
        <dbReference type="ChEBI" id="CHEBI:29105"/>
    </ligand>
</feature>
<feature type="binding site" evidence="1">
    <location>
        <position position="12"/>
    </location>
    <ligand>
        <name>Zn(2+)</name>
        <dbReference type="ChEBI" id="CHEBI:29105"/>
    </ligand>
</feature>
<feature type="binding site" evidence="1">
    <location>
        <position position="28"/>
    </location>
    <ligand>
        <name>Zn(2+)</name>
        <dbReference type="ChEBI" id="CHEBI:29105"/>
    </ligand>
</feature>
<feature type="binding site" evidence="1">
    <location>
        <position position="32"/>
    </location>
    <ligand>
        <name>Zn(2+)</name>
        <dbReference type="ChEBI" id="CHEBI:29105"/>
    </ligand>
</feature>
<proteinExistence type="inferred from homology"/>
<dbReference type="EMBL" id="CP000076">
    <property type="protein sequence ID" value="AAY94505.1"/>
    <property type="molecule type" value="Genomic_DNA"/>
</dbReference>
<dbReference type="RefSeq" id="WP_011063524.1">
    <property type="nucleotide sequence ID" value="NC_004129.6"/>
</dbReference>
<dbReference type="SMR" id="Q4K5X0"/>
<dbReference type="STRING" id="220664.PFL_5291"/>
<dbReference type="KEGG" id="pfl:PFL_5291"/>
<dbReference type="PATRIC" id="fig|220664.5.peg.5403"/>
<dbReference type="eggNOG" id="COG3024">
    <property type="taxonomic scope" value="Bacteria"/>
</dbReference>
<dbReference type="HOGENOM" id="CLU_178280_3_2_6"/>
<dbReference type="Proteomes" id="UP000008540">
    <property type="component" value="Chromosome"/>
</dbReference>
<dbReference type="GO" id="GO:0008657">
    <property type="term" value="F:DNA topoisomerase type II (double strand cut, ATP-hydrolyzing) inhibitor activity"/>
    <property type="evidence" value="ECO:0007669"/>
    <property type="project" value="UniProtKB-UniRule"/>
</dbReference>
<dbReference type="GO" id="GO:0008270">
    <property type="term" value="F:zinc ion binding"/>
    <property type="evidence" value="ECO:0007669"/>
    <property type="project" value="UniProtKB-UniRule"/>
</dbReference>
<dbReference type="GO" id="GO:0006355">
    <property type="term" value="P:regulation of DNA-templated transcription"/>
    <property type="evidence" value="ECO:0007669"/>
    <property type="project" value="InterPro"/>
</dbReference>
<dbReference type="Gene3D" id="3.30.50.10">
    <property type="entry name" value="Erythroid Transcription Factor GATA-1, subunit A"/>
    <property type="match status" value="1"/>
</dbReference>
<dbReference type="HAMAP" id="MF_00649">
    <property type="entry name" value="DNA_gyrase_inhibitor_YacG"/>
    <property type="match status" value="1"/>
</dbReference>
<dbReference type="InterPro" id="IPR005584">
    <property type="entry name" value="DNA_gyrase_inhibitor_YacG"/>
</dbReference>
<dbReference type="InterPro" id="IPR013088">
    <property type="entry name" value="Znf_NHR/GATA"/>
</dbReference>
<dbReference type="NCBIfam" id="NF001638">
    <property type="entry name" value="PRK00418.1"/>
    <property type="match status" value="1"/>
</dbReference>
<dbReference type="PANTHER" id="PTHR36150">
    <property type="entry name" value="DNA GYRASE INHIBITOR YACG"/>
    <property type="match status" value="1"/>
</dbReference>
<dbReference type="PANTHER" id="PTHR36150:SF1">
    <property type="entry name" value="DNA GYRASE INHIBITOR YACG"/>
    <property type="match status" value="1"/>
</dbReference>
<dbReference type="Pfam" id="PF03884">
    <property type="entry name" value="YacG"/>
    <property type="match status" value="1"/>
</dbReference>
<dbReference type="SUPFAM" id="SSF57716">
    <property type="entry name" value="Glucocorticoid receptor-like (DNA-binding domain)"/>
    <property type="match status" value="1"/>
</dbReference>
<protein>
    <recommendedName>
        <fullName evidence="1">DNA gyrase inhibitor YacG</fullName>
    </recommendedName>
</protein>
<sequence>MSQPLTVECPTCGAPVEWTAANINRPFCSDRCKLIDLGAWAAEEHKIPVSPDAEDELFSEELPPRAH</sequence>
<accession>Q4K5X0</accession>